<keyword id="KW-0687">Ribonucleoprotein</keyword>
<keyword id="KW-0689">Ribosomal protein</keyword>
<keyword id="KW-0694">RNA-binding</keyword>
<keyword id="KW-0699">rRNA-binding</keyword>
<proteinExistence type="inferred from homology"/>
<evidence type="ECO:0000255" key="1">
    <source>
        <dbReference type="HAMAP-Rule" id="MF_01363"/>
    </source>
</evidence>
<evidence type="ECO:0000305" key="2"/>
<feature type="chain" id="PRO_1000086992" description="Large ribosomal subunit protein bL21">
    <location>
        <begin position="1"/>
        <end position="104"/>
    </location>
</feature>
<protein>
    <recommendedName>
        <fullName evidence="1">Large ribosomal subunit protein bL21</fullName>
    </recommendedName>
    <alternativeName>
        <fullName evidence="2">50S ribosomal protein L21</fullName>
    </alternativeName>
</protein>
<organism>
    <name type="scientific">Pseudomonas putida (strain GB-1)</name>
    <dbReference type="NCBI Taxonomy" id="76869"/>
    <lineage>
        <taxon>Bacteria</taxon>
        <taxon>Pseudomonadati</taxon>
        <taxon>Pseudomonadota</taxon>
        <taxon>Gammaproteobacteria</taxon>
        <taxon>Pseudomonadales</taxon>
        <taxon>Pseudomonadaceae</taxon>
        <taxon>Pseudomonas</taxon>
    </lineage>
</organism>
<comment type="function">
    <text evidence="1">This protein binds to 23S rRNA in the presence of protein L20.</text>
</comment>
<comment type="subunit">
    <text evidence="1">Part of the 50S ribosomal subunit. Contacts protein L20.</text>
</comment>
<comment type="similarity">
    <text evidence="1">Belongs to the bacterial ribosomal protein bL21 family.</text>
</comment>
<dbReference type="EMBL" id="CP000926">
    <property type="protein sequence ID" value="ABY96630.1"/>
    <property type="molecule type" value="Genomic_DNA"/>
</dbReference>
<dbReference type="RefSeq" id="WP_003247466.1">
    <property type="nucleotide sequence ID" value="NC_010322.1"/>
</dbReference>
<dbReference type="SMR" id="B0KMF4"/>
<dbReference type="GeneID" id="97166220"/>
<dbReference type="KEGG" id="ppg:PputGB1_0720"/>
<dbReference type="eggNOG" id="COG0261">
    <property type="taxonomic scope" value="Bacteria"/>
</dbReference>
<dbReference type="HOGENOM" id="CLU_061463_3_2_6"/>
<dbReference type="Proteomes" id="UP000002157">
    <property type="component" value="Chromosome"/>
</dbReference>
<dbReference type="GO" id="GO:0005737">
    <property type="term" value="C:cytoplasm"/>
    <property type="evidence" value="ECO:0007669"/>
    <property type="project" value="UniProtKB-ARBA"/>
</dbReference>
<dbReference type="GO" id="GO:1990904">
    <property type="term" value="C:ribonucleoprotein complex"/>
    <property type="evidence" value="ECO:0007669"/>
    <property type="project" value="UniProtKB-KW"/>
</dbReference>
<dbReference type="GO" id="GO:0005840">
    <property type="term" value="C:ribosome"/>
    <property type="evidence" value="ECO:0007669"/>
    <property type="project" value="UniProtKB-KW"/>
</dbReference>
<dbReference type="GO" id="GO:0019843">
    <property type="term" value="F:rRNA binding"/>
    <property type="evidence" value="ECO:0007669"/>
    <property type="project" value="UniProtKB-UniRule"/>
</dbReference>
<dbReference type="GO" id="GO:0003735">
    <property type="term" value="F:structural constituent of ribosome"/>
    <property type="evidence" value="ECO:0007669"/>
    <property type="project" value="InterPro"/>
</dbReference>
<dbReference type="GO" id="GO:0006412">
    <property type="term" value="P:translation"/>
    <property type="evidence" value="ECO:0007669"/>
    <property type="project" value="UniProtKB-UniRule"/>
</dbReference>
<dbReference type="HAMAP" id="MF_01363">
    <property type="entry name" value="Ribosomal_bL21"/>
    <property type="match status" value="1"/>
</dbReference>
<dbReference type="InterPro" id="IPR028909">
    <property type="entry name" value="bL21-like"/>
</dbReference>
<dbReference type="InterPro" id="IPR036164">
    <property type="entry name" value="bL21-like_sf"/>
</dbReference>
<dbReference type="InterPro" id="IPR001787">
    <property type="entry name" value="Ribosomal_bL21"/>
</dbReference>
<dbReference type="InterPro" id="IPR018258">
    <property type="entry name" value="Ribosomal_bL21_CS"/>
</dbReference>
<dbReference type="NCBIfam" id="TIGR00061">
    <property type="entry name" value="L21"/>
    <property type="match status" value="1"/>
</dbReference>
<dbReference type="PANTHER" id="PTHR21349">
    <property type="entry name" value="50S RIBOSOMAL PROTEIN L21"/>
    <property type="match status" value="1"/>
</dbReference>
<dbReference type="PANTHER" id="PTHR21349:SF0">
    <property type="entry name" value="LARGE RIBOSOMAL SUBUNIT PROTEIN BL21M"/>
    <property type="match status" value="1"/>
</dbReference>
<dbReference type="Pfam" id="PF00829">
    <property type="entry name" value="Ribosomal_L21p"/>
    <property type="match status" value="1"/>
</dbReference>
<dbReference type="SUPFAM" id="SSF141091">
    <property type="entry name" value="L21p-like"/>
    <property type="match status" value="1"/>
</dbReference>
<dbReference type="PROSITE" id="PS01169">
    <property type="entry name" value="RIBOSOMAL_L21"/>
    <property type="match status" value="1"/>
</dbReference>
<gene>
    <name evidence="1" type="primary">rplU</name>
    <name type="ordered locus">PputGB1_0720</name>
</gene>
<accession>B0KMF4</accession>
<reference key="1">
    <citation type="submission" date="2008-01" db="EMBL/GenBank/DDBJ databases">
        <title>Complete sequence of Pseudomonas putida GB-1.</title>
        <authorList>
            <consortium name="US DOE Joint Genome Institute"/>
            <person name="Copeland A."/>
            <person name="Lucas S."/>
            <person name="Lapidus A."/>
            <person name="Barry K."/>
            <person name="Glavina del Rio T."/>
            <person name="Dalin E."/>
            <person name="Tice H."/>
            <person name="Pitluck S."/>
            <person name="Bruce D."/>
            <person name="Goodwin L."/>
            <person name="Chertkov O."/>
            <person name="Brettin T."/>
            <person name="Detter J.C."/>
            <person name="Han C."/>
            <person name="Kuske C.R."/>
            <person name="Schmutz J."/>
            <person name="Larimer F."/>
            <person name="Land M."/>
            <person name="Hauser L."/>
            <person name="Kyrpides N."/>
            <person name="Kim E."/>
            <person name="McCarthy J.K."/>
            <person name="Richardson P."/>
        </authorList>
    </citation>
    <scope>NUCLEOTIDE SEQUENCE [LARGE SCALE GENOMIC DNA]</scope>
    <source>
        <strain>GB-1</strain>
    </source>
</reference>
<sequence>MSYAVIVTGGKQYKVAEGEFLKIEKLEVATGESVTFDRVLLVANGEEVTIGAPVVAGAKVVAEVVSQGRHDKVRIIKFRRRKHHMKRMGHRQWFTEIKITGIQA</sequence>
<name>RL21_PSEPG</name>